<proteinExistence type="evidence at protein level"/>
<protein>
    <recommendedName>
        <fullName evidence="2 4">Carnitine monooxygenase oxygenase subunit</fullName>
        <ecNumber evidence="2 3">1.14.13.239</ecNumber>
    </recommendedName>
    <alternativeName>
        <fullName evidence="2 4">Carnitine monooxygenase alpha subunit</fullName>
    </alternativeName>
</protein>
<feature type="chain" id="PRO_0000085063" description="Carnitine monooxygenase oxygenase subunit">
    <location>
        <begin position="1"/>
        <end position="374"/>
    </location>
</feature>
<feature type="domain" description="Rieske" evidence="2">
    <location>
        <begin position="47"/>
        <end position="155"/>
    </location>
</feature>
<feature type="binding site" evidence="2">
    <location>
        <position position="89"/>
    </location>
    <ligand>
        <name>[2Fe-2S] cluster</name>
        <dbReference type="ChEBI" id="CHEBI:190135"/>
    </ligand>
</feature>
<feature type="binding site" evidence="2">
    <location>
        <position position="91"/>
    </location>
    <ligand>
        <name>[2Fe-2S] cluster</name>
        <dbReference type="ChEBI" id="CHEBI:190135"/>
    </ligand>
</feature>
<feature type="binding site" evidence="2">
    <location>
        <position position="109"/>
    </location>
    <ligand>
        <name>[2Fe-2S] cluster</name>
        <dbReference type="ChEBI" id="CHEBI:190135"/>
    </ligand>
</feature>
<feature type="binding site" evidence="2">
    <location>
        <position position="112"/>
    </location>
    <ligand>
        <name>[2Fe-2S] cluster</name>
        <dbReference type="ChEBI" id="CHEBI:190135"/>
    </ligand>
</feature>
<feature type="binding site" evidence="2">
    <location>
        <position position="211"/>
    </location>
    <ligand>
        <name>Fe cation</name>
        <dbReference type="ChEBI" id="CHEBI:24875"/>
    </ligand>
</feature>
<feature type="binding site" evidence="2">
    <location>
        <position position="216"/>
    </location>
    <ligand>
        <name>Fe cation</name>
        <dbReference type="ChEBI" id="CHEBI:24875"/>
    </ligand>
</feature>
<feature type="binding site" evidence="2">
    <location>
        <position position="325"/>
    </location>
    <ligand>
        <name>Fe cation</name>
        <dbReference type="ChEBI" id="CHEBI:24875"/>
    </ligand>
</feature>
<gene>
    <name type="primary">yeaW</name>
    <name type="ordered locus">b1802</name>
    <name type="ordered locus">JW5294</name>
</gene>
<reference key="1">
    <citation type="journal article" date="1996" name="DNA Res.">
        <title>A 460-kb DNA sequence of the Escherichia coli K-12 genome corresponding to the 40.1-50.0 min region on the linkage map.</title>
        <authorList>
            <person name="Itoh T."/>
            <person name="Aiba H."/>
            <person name="Baba T."/>
            <person name="Fujita K."/>
            <person name="Hayashi K."/>
            <person name="Inada T."/>
            <person name="Isono K."/>
            <person name="Kasai H."/>
            <person name="Kimura S."/>
            <person name="Kitakawa M."/>
            <person name="Kitagawa M."/>
            <person name="Makino K."/>
            <person name="Miki T."/>
            <person name="Mizobuchi K."/>
            <person name="Mori H."/>
            <person name="Mori T."/>
            <person name="Motomura K."/>
            <person name="Nakade S."/>
            <person name="Nakamura Y."/>
            <person name="Nashimoto H."/>
            <person name="Nishio Y."/>
            <person name="Oshima T."/>
            <person name="Saito N."/>
            <person name="Sampei G."/>
            <person name="Seki Y."/>
            <person name="Sivasundaram S."/>
            <person name="Tagami H."/>
            <person name="Takeda J."/>
            <person name="Takemoto K."/>
            <person name="Wada C."/>
            <person name="Yamamoto Y."/>
            <person name="Horiuchi T."/>
        </authorList>
    </citation>
    <scope>NUCLEOTIDE SEQUENCE [LARGE SCALE GENOMIC DNA]</scope>
    <source>
        <strain>K12 / W3110 / ATCC 27325 / DSM 5911</strain>
    </source>
</reference>
<reference key="2">
    <citation type="journal article" date="1997" name="Science">
        <title>The complete genome sequence of Escherichia coli K-12.</title>
        <authorList>
            <person name="Blattner F.R."/>
            <person name="Plunkett G. III"/>
            <person name="Bloch C.A."/>
            <person name="Perna N.T."/>
            <person name="Burland V."/>
            <person name="Riley M."/>
            <person name="Collado-Vides J."/>
            <person name="Glasner J.D."/>
            <person name="Rode C.K."/>
            <person name="Mayhew G.F."/>
            <person name="Gregor J."/>
            <person name="Davis N.W."/>
            <person name="Kirkpatrick H.A."/>
            <person name="Goeden M.A."/>
            <person name="Rose D.J."/>
            <person name="Mau B."/>
            <person name="Shao Y."/>
        </authorList>
    </citation>
    <scope>NUCLEOTIDE SEQUENCE [LARGE SCALE GENOMIC DNA]</scope>
    <source>
        <strain>K12 / MG1655 / ATCC 47076</strain>
    </source>
</reference>
<reference key="3">
    <citation type="journal article" date="2006" name="Mol. Syst. Biol.">
        <title>Highly accurate genome sequences of Escherichia coli K-12 strains MG1655 and W3110.</title>
        <authorList>
            <person name="Hayashi K."/>
            <person name="Morooka N."/>
            <person name="Yamamoto Y."/>
            <person name="Fujita K."/>
            <person name="Isono K."/>
            <person name="Choi S."/>
            <person name="Ohtsubo E."/>
            <person name="Baba T."/>
            <person name="Wanner B.L."/>
            <person name="Mori H."/>
            <person name="Horiuchi T."/>
        </authorList>
    </citation>
    <scope>NUCLEOTIDE SEQUENCE [LARGE SCALE GENOMIC DNA]</scope>
    <source>
        <strain>K12 / W3110 / ATCC 27325 / DSM 5911</strain>
    </source>
</reference>
<reference key="4">
    <citation type="journal article" date="2014" name="Cell Metab.">
        <title>Gamma-butyrobetaine is a proatherogenic intermediate in gut microbial metabolism of L-carnitine to TMAO.</title>
        <authorList>
            <person name="Koeth R.A."/>
            <person name="Levison B.S."/>
            <person name="Culley M.K."/>
            <person name="Buffa J.A."/>
            <person name="Wang Z."/>
            <person name="Gregory J.C."/>
            <person name="Org E."/>
            <person name="Wu Y."/>
            <person name="Li L."/>
            <person name="Smith J.D."/>
            <person name="Tang W.H."/>
            <person name="DiDonato J.A."/>
            <person name="Lusis A.J."/>
            <person name="Hazen S.L."/>
        </authorList>
    </citation>
    <scope>FUNCTION</scope>
    <scope>CATALYTIC ACTIVITY</scope>
    <scope>PATHWAY</scope>
    <source>
        <strain>K12 / DH10B</strain>
    </source>
</reference>
<keyword id="KW-0001">2Fe-2S</keyword>
<keyword id="KW-0408">Iron</keyword>
<keyword id="KW-0411">Iron-sulfur</keyword>
<keyword id="KW-0479">Metal-binding</keyword>
<keyword id="KW-0520">NAD</keyword>
<keyword id="KW-0521">NADP</keyword>
<keyword id="KW-0560">Oxidoreductase</keyword>
<keyword id="KW-1185">Reference proteome</keyword>
<organism>
    <name type="scientific">Escherichia coli (strain K12)</name>
    <dbReference type="NCBI Taxonomy" id="83333"/>
    <lineage>
        <taxon>Bacteria</taxon>
        <taxon>Pseudomonadati</taxon>
        <taxon>Pseudomonadota</taxon>
        <taxon>Gammaproteobacteria</taxon>
        <taxon>Enterobacterales</taxon>
        <taxon>Enterobacteriaceae</taxon>
        <taxon>Escherichia</taxon>
    </lineage>
</organism>
<comment type="function">
    <text evidence="3">Converts carnitine to trimethylamine and malic semialdehyde. Can also use gamma-butyrobetaine, choline and betaine as substrates.</text>
</comment>
<comment type="catalytic activity">
    <reaction evidence="2 3">
        <text>(R)-carnitine + NADH + O2 + H(+) = (3R)-3-hydroxy-4-oxobutanoate + trimethylamine + NAD(+) + H2O</text>
        <dbReference type="Rhea" id="RHEA:55396"/>
        <dbReference type="ChEBI" id="CHEBI:15377"/>
        <dbReference type="ChEBI" id="CHEBI:15378"/>
        <dbReference type="ChEBI" id="CHEBI:15379"/>
        <dbReference type="ChEBI" id="CHEBI:16347"/>
        <dbReference type="ChEBI" id="CHEBI:57540"/>
        <dbReference type="ChEBI" id="CHEBI:57945"/>
        <dbReference type="ChEBI" id="CHEBI:58389"/>
        <dbReference type="ChEBI" id="CHEBI:138809"/>
        <dbReference type="EC" id="1.14.13.239"/>
    </reaction>
</comment>
<comment type="catalytic activity">
    <reaction evidence="2 3">
        <text>(R)-carnitine + NADPH + O2 + H(+) = (3R)-3-hydroxy-4-oxobutanoate + trimethylamine + NADP(+) + H2O</text>
        <dbReference type="Rhea" id="RHEA:55368"/>
        <dbReference type="ChEBI" id="CHEBI:15377"/>
        <dbReference type="ChEBI" id="CHEBI:15378"/>
        <dbReference type="ChEBI" id="CHEBI:15379"/>
        <dbReference type="ChEBI" id="CHEBI:16347"/>
        <dbReference type="ChEBI" id="CHEBI:57783"/>
        <dbReference type="ChEBI" id="CHEBI:58349"/>
        <dbReference type="ChEBI" id="CHEBI:58389"/>
        <dbReference type="ChEBI" id="CHEBI:138809"/>
        <dbReference type="EC" id="1.14.13.239"/>
    </reaction>
</comment>
<comment type="cofactor">
    <cofactor evidence="2">
        <name>[2Fe-2S] cluster</name>
        <dbReference type="ChEBI" id="CHEBI:190135"/>
    </cofactor>
    <text evidence="2">Binds 1 [2Fe-2S] cluster per subunit.</text>
</comment>
<comment type="cofactor">
    <cofactor evidence="2">
        <name>Fe cation</name>
        <dbReference type="ChEBI" id="CHEBI:24875"/>
    </cofactor>
    <text evidence="2">Binds 1 Fe cation per subunit.</text>
</comment>
<comment type="pathway">
    <text evidence="2 3">Amine and polyamine metabolism; carnitine metabolism.</text>
</comment>
<comment type="subunit">
    <text evidence="1">Composed of an oxygenase subunit (yeaW) and a reductase subunit (yeaX).</text>
</comment>
<comment type="similarity">
    <text evidence="2 4">Belongs to the bacterial ring-hydroxylating dioxygenase alpha subunit family. CntA subfamily.</text>
</comment>
<dbReference type="EC" id="1.14.13.239" evidence="2 3"/>
<dbReference type="EMBL" id="U00096">
    <property type="protein sequence ID" value="AAC74872.1"/>
    <property type="molecule type" value="Genomic_DNA"/>
</dbReference>
<dbReference type="EMBL" id="AP009048">
    <property type="protein sequence ID" value="BAA15597.2"/>
    <property type="molecule type" value="Genomic_DNA"/>
</dbReference>
<dbReference type="PIR" id="B64941">
    <property type="entry name" value="B64941"/>
</dbReference>
<dbReference type="RefSeq" id="NP_416316.1">
    <property type="nucleotide sequence ID" value="NC_000913.3"/>
</dbReference>
<dbReference type="RefSeq" id="WP_000067822.1">
    <property type="nucleotide sequence ID" value="NZ_SSZK01000001.1"/>
</dbReference>
<dbReference type="SMR" id="P0ABR7"/>
<dbReference type="BioGRID" id="4259149">
    <property type="interactions" value="7"/>
</dbReference>
<dbReference type="FunCoup" id="P0ABR7">
    <property type="interactions" value="127"/>
</dbReference>
<dbReference type="STRING" id="511145.b1802"/>
<dbReference type="BindingDB" id="P0ABR7"/>
<dbReference type="PaxDb" id="511145-b1802"/>
<dbReference type="EnsemblBacteria" id="AAC74872">
    <property type="protein sequence ID" value="AAC74872"/>
    <property type="gene ID" value="b1802"/>
</dbReference>
<dbReference type="GeneID" id="93776050"/>
<dbReference type="GeneID" id="946325"/>
<dbReference type="KEGG" id="ecj:JW5294"/>
<dbReference type="KEGG" id="eco:b1802"/>
<dbReference type="KEGG" id="ecoc:C3026_10270"/>
<dbReference type="PATRIC" id="fig|1411691.4.peg.451"/>
<dbReference type="EchoBASE" id="EB3282"/>
<dbReference type="eggNOG" id="COG4638">
    <property type="taxonomic scope" value="Bacteria"/>
</dbReference>
<dbReference type="HOGENOM" id="CLU_026244_3_0_6"/>
<dbReference type="InParanoid" id="P0ABR7"/>
<dbReference type="OMA" id="SEVECNW"/>
<dbReference type="OrthoDB" id="9769355at2"/>
<dbReference type="PhylomeDB" id="P0ABR7"/>
<dbReference type="BioCyc" id="EcoCyc:G6988-MONOMER"/>
<dbReference type="BioCyc" id="MetaCyc:G6988-MONOMER"/>
<dbReference type="UniPathway" id="UPA00117"/>
<dbReference type="PRO" id="PR:P0ABR7"/>
<dbReference type="Proteomes" id="UP000000625">
    <property type="component" value="Chromosome"/>
</dbReference>
<dbReference type="GO" id="GO:0032991">
    <property type="term" value="C:protein-containing complex"/>
    <property type="evidence" value="ECO:0000314"/>
    <property type="project" value="EcoCyc"/>
</dbReference>
<dbReference type="GO" id="GO:0051537">
    <property type="term" value="F:2 iron, 2 sulfur cluster binding"/>
    <property type="evidence" value="ECO:0000314"/>
    <property type="project" value="EcoCyc"/>
</dbReference>
<dbReference type="GO" id="GO:0042802">
    <property type="term" value="F:identical protein binding"/>
    <property type="evidence" value="ECO:0000314"/>
    <property type="project" value="EcoCyc"/>
</dbReference>
<dbReference type="GO" id="GO:0005506">
    <property type="term" value="F:iron ion binding"/>
    <property type="evidence" value="ECO:0007669"/>
    <property type="project" value="InterPro"/>
</dbReference>
<dbReference type="GO" id="GO:0016709">
    <property type="term" value="F:oxidoreductase activity, acting on paired donors, with incorporation or reduction of molecular oxygen, NAD(P)H as one donor, and incorporation of one atom of oxygen"/>
    <property type="evidence" value="ECO:0007669"/>
    <property type="project" value="UniProtKB-UniRule"/>
</dbReference>
<dbReference type="GO" id="GO:0009437">
    <property type="term" value="P:carnitine metabolic process"/>
    <property type="evidence" value="ECO:0007669"/>
    <property type="project" value="UniProtKB-UniRule"/>
</dbReference>
<dbReference type="CDD" id="cd08886">
    <property type="entry name" value="RHO_alpha_C_2"/>
    <property type="match status" value="1"/>
</dbReference>
<dbReference type="CDD" id="cd03469">
    <property type="entry name" value="Rieske_RO_Alpha_N"/>
    <property type="match status" value="1"/>
</dbReference>
<dbReference type="FunFam" id="3.90.380.10:FF:000002">
    <property type="entry name" value="Carnitine monooxygenase oxygenase subunit"/>
    <property type="match status" value="1"/>
</dbReference>
<dbReference type="Gene3D" id="3.90.380.10">
    <property type="entry name" value="Naphthalene 1,2-dioxygenase Alpha Subunit, Chain A, domain 1"/>
    <property type="match status" value="2"/>
</dbReference>
<dbReference type="Gene3D" id="2.102.10.10">
    <property type="entry name" value="Rieske [2Fe-2S] iron-sulphur domain"/>
    <property type="match status" value="1"/>
</dbReference>
<dbReference type="HAMAP" id="MF_02097">
    <property type="entry name" value="Carnitine_monoox_A"/>
    <property type="match status" value="1"/>
</dbReference>
<dbReference type="InterPro" id="IPR039004">
    <property type="entry name" value="Carnitine_monoox_A"/>
</dbReference>
<dbReference type="InterPro" id="IPR017941">
    <property type="entry name" value="Rieske_2Fe-2S"/>
</dbReference>
<dbReference type="InterPro" id="IPR036922">
    <property type="entry name" value="Rieske_2Fe-2S_sf"/>
</dbReference>
<dbReference type="InterPro" id="IPR015881">
    <property type="entry name" value="Ring-hydroxy_dOase_2Fe2S_BS"/>
</dbReference>
<dbReference type="InterPro" id="IPR015879">
    <property type="entry name" value="Ring_hydroxy_dOase_asu_C_dom"/>
</dbReference>
<dbReference type="InterPro" id="IPR001663">
    <property type="entry name" value="Rng_hydr_dOase-A"/>
</dbReference>
<dbReference type="PANTHER" id="PTHR43756">
    <property type="entry name" value="CHOLINE MONOOXYGENASE, CHLOROPLASTIC"/>
    <property type="match status" value="1"/>
</dbReference>
<dbReference type="PANTHER" id="PTHR43756:SF5">
    <property type="entry name" value="CHOLINE MONOOXYGENASE, CHLOROPLASTIC"/>
    <property type="match status" value="1"/>
</dbReference>
<dbReference type="Pfam" id="PF00355">
    <property type="entry name" value="Rieske"/>
    <property type="match status" value="1"/>
</dbReference>
<dbReference type="Pfam" id="PF00848">
    <property type="entry name" value="Ring_hydroxyl_A"/>
    <property type="match status" value="1"/>
</dbReference>
<dbReference type="PRINTS" id="PR00090">
    <property type="entry name" value="RNGDIOXGNASE"/>
</dbReference>
<dbReference type="SUPFAM" id="SSF55961">
    <property type="entry name" value="Bet v1-like"/>
    <property type="match status" value="1"/>
</dbReference>
<dbReference type="SUPFAM" id="SSF50022">
    <property type="entry name" value="ISP domain"/>
    <property type="match status" value="1"/>
</dbReference>
<dbReference type="PROSITE" id="PS51296">
    <property type="entry name" value="RIESKE"/>
    <property type="match status" value="1"/>
</dbReference>
<dbReference type="PROSITE" id="PS00570">
    <property type="entry name" value="RING_HYDROXYL_ALPHA"/>
    <property type="match status" value="1"/>
</dbReference>
<sequence length="374" mass="42561">MSNLSPDFVLPENFCANPQEAWTIPARFYTDQNAFEHEKENVFAKSWICVAHSSELANANDYVTREIIGESIVLVRGRDKVLRAFYNVCPHRGHQLLSGEGKAKNVITCPYHAWAFKLDGNLAHARNCENVANFDSDKAQLVPVRLEEYAGFVFINMDPNATSVEDQLPGLGAKVLEACPEVHDLKLAARFTTRTPANWKNIVDNYLECYHCGPAHPGFSDSVQVDRYWHTMHGNWTLQYGFAKPSEQSFKFEEGTDAAFHGFWLWPCTMLNVTPIKGMMTVIYEFPVDSETTLQNYDIYFTNEELTDEQKSLIEWYRDVFRPEDLRLVESVQKGLKSRGYRGQGRIMADSSGSGISEHGIAHFHNLLAQVFKD</sequence>
<name>CNTA_ECOLI</name>
<evidence type="ECO:0000250" key="1">
    <source>
        <dbReference type="UniProtKB" id="D0C9N6"/>
    </source>
</evidence>
<evidence type="ECO:0000255" key="2">
    <source>
        <dbReference type="HAMAP-Rule" id="MF_02097"/>
    </source>
</evidence>
<evidence type="ECO:0000269" key="3">
    <source>
    </source>
</evidence>
<evidence type="ECO:0000305" key="4"/>
<accession>P0ABR7</accession>
<accession>P76253</accession>